<organism>
    <name type="scientific">Pseudothermotoga lettingae (strain ATCC BAA-301 / DSM 14385 / NBRC 107922 / TMO)</name>
    <name type="common">Thermotoga lettingae</name>
    <dbReference type="NCBI Taxonomy" id="416591"/>
    <lineage>
        <taxon>Bacteria</taxon>
        <taxon>Thermotogati</taxon>
        <taxon>Thermotogota</taxon>
        <taxon>Thermotogae</taxon>
        <taxon>Thermotogales</taxon>
        <taxon>Thermotogaceae</taxon>
        <taxon>Pseudothermotoga</taxon>
    </lineage>
</organism>
<reference key="1">
    <citation type="submission" date="2007-08" db="EMBL/GenBank/DDBJ databases">
        <title>Complete sequence of Thermotoga lettingae TMO.</title>
        <authorList>
            <consortium name="US DOE Joint Genome Institute"/>
            <person name="Copeland A."/>
            <person name="Lucas S."/>
            <person name="Lapidus A."/>
            <person name="Barry K."/>
            <person name="Glavina del Rio T."/>
            <person name="Dalin E."/>
            <person name="Tice H."/>
            <person name="Pitluck S."/>
            <person name="Foster B."/>
            <person name="Bruce D."/>
            <person name="Schmutz J."/>
            <person name="Larimer F."/>
            <person name="Land M."/>
            <person name="Hauser L."/>
            <person name="Kyrpides N."/>
            <person name="Mikhailova N."/>
            <person name="Nelson K."/>
            <person name="Gogarten J.P."/>
            <person name="Noll K."/>
            <person name="Richardson P."/>
        </authorList>
    </citation>
    <scope>NUCLEOTIDE SEQUENCE [LARGE SCALE GENOMIC DNA]</scope>
    <source>
        <strain>ATCC BAA-301 / DSM 14385 / NBRC 107922 / TMO</strain>
    </source>
</reference>
<protein>
    <recommendedName>
        <fullName evidence="1">GTP cyclohydrolase FolE2</fullName>
        <ecNumber evidence="1">3.5.4.16</ecNumber>
    </recommendedName>
</protein>
<name>GCH4_PSELT</name>
<gene>
    <name evidence="1" type="primary">folE2</name>
    <name type="ordered locus">Tlet_1638</name>
</gene>
<comment type="function">
    <text evidence="1">Converts GTP to 7,8-dihydroneopterin triphosphate.</text>
</comment>
<comment type="catalytic activity">
    <reaction evidence="1">
        <text>GTP + H2O = 7,8-dihydroneopterin 3'-triphosphate + formate + H(+)</text>
        <dbReference type="Rhea" id="RHEA:17473"/>
        <dbReference type="ChEBI" id="CHEBI:15377"/>
        <dbReference type="ChEBI" id="CHEBI:15378"/>
        <dbReference type="ChEBI" id="CHEBI:15740"/>
        <dbReference type="ChEBI" id="CHEBI:37565"/>
        <dbReference type="ChEBI" id="CHEBI:58462"/>
        <dbReference type="EC" id="3.5.4.16"/>
    </reaction>
</comment>
<comment type="pathway">
    <text evidence="1">Cofactor biosynthesis; 7,8-dihydroneopterin triphosphate biosynthesis; 7,8-dihydroneopterin triphosphate from GTP: step 1/1.</text>
</comment>
<comment type="similarity">
    <text evidence="1">Belongs to the GTP cyclohydrolase IV family.</text>
</comment>
<dbReference type="EC" id="3.5.4.16" evidence="1"/>
<dbReference type="EMBL" id="CP000812">
    <property type="protein sequence ID" value="ABV34192.1"/>
    <property type="molecule type" value="Genomic_DNA"/>
</dbReference>
<dbReference type="RefSeq" id="WP_012003668.1">
    <property type="nucleotide sequence ID" value="NZ_BSDV01000001.1"/>
</dbReference>
<dbReference type="SMR" id="A8F7Q8"/>
<dbReference type="STRING" id="416591.Tlet_1638"/>
<dbReference type="KEGG" id="tle:Tlet_1638"/>
<dbReference type="eggNOG" id="COG1469">
    <property type="taxonomic scope" value="Bacteria"/>
</dbReference>
<dbReference type="HOGENOM" id="CLU_062816_1_1_0"/>
<dbReference type="OrthoDB" id="9774824at2"/>
<dbReference type="UniPathway" id="UPA00848">
    <property type="reaction ID" value="UER00151"/>
</dbReference>
<dbReference type="Proteomes" id="UP000002016">
    <property type="component" value="Chromosome"/>
</dbReference>
<dbReference type="GO" id="GO:0003934">
    <property type="term" value="F:GTP cyclohydrolase I activity"/>
    <property type="evidence" value="ECO:0007669"/>
    <property type="project" value="UniProtKB-UniRule"/>
</dbReference>
<dbReference type="GO" id="GO:0046654">
    <property type="term" value="P:tetrahydrofolate biosynthetic process"/>
    <property type="evidence" value="ECO:0007669"/>
    <property type="project" value="UniProtKB-UniRule"/>
</dbReference>
<dbReference type="Gene3D" id="3.10.270.10">
    <property type="entry name" value="Urate Oxidase"/>
    <property type="match status" value="1"/>
</dbReference>
<dbReference type="HAMAP" id="MF_01527_B">
    <property type="entry name" value="GTP_cyclohydrol_B"/>
    <property type="match status" value="1"/>
</dbReference>
<dbReference type="InterPro" id="IPR022838">
    <property type="entry name" value="GTP_cyclohydrolase_FolE2"/>
</dbReference>
<dbReference type="InterPro" id="IPR003801">
    <property type="entry name" value="GTP_cyclohydrolase_FolE2/MptA"/>
</dbReference>
<dbReference type="NCBIfam" id="NF010200">
    <property type="entry name" value="PRK13674.1-1"/>
    <property type="match status" value="1"/>
</dbReference>
<dbReference type="PANTHER" id="PTHR36445">
    <property type="entry name" value="GTP CYCLOHYDROLASE MPTA"/>
    <property type="match status" value="1"/>
</dbReference>
<dbReference type="PANTHER" id="PTHR36445:SF1">
    <property type="entry name" value="GTP CYCLOHYDROLASE MPTA"/>
    <property type="match status" value="1"/>
</dbReference>
<dbReference type="Pfam" id="PF02649">
    <property type="entry name" value="GCHY-1"/>
    <property type="match status" value="1"/>
</dbReference>
<proteinExistence type="inferred from homology"/>
<feature type="chain" id="PRO_0000316534" description="GTP cyclohydrolase FolE2">
    <location>
        <begin position="1"/>
        <end position="258"/>
    </location>
</feature>
<feature type="site" description="May be catalytically important" evidence="1">
    <location>
        <position position="145"/>
    </location>
</feature>
<sequence length="258" mass="30210">MKDVQNQPDNRNIYLQRVGIRNLQYPVTVMDRNNGYQDTVATINMYVDLPVNFRGTHMSRFVEVLNRYRLGIDPKIIKNMLEELRNNLNASVARVEIEFPYFILKKAPVSSIESFLKYTCRIEGQKTEKLYEFTMSVGVPIMTLCPCSKEISERGAHNQRAMAWIHIKSKKMIWFEELIDAAEQAASSPVFTILKRVDEKFVTEHAYDNPRFVEDVAREIAVRLNRDERISWYRVEVESFESIHDHSAYACVMKDKED</sequence>
<keyword id="KW-0378">Hydrolase</keyword>
<keyword id="KW-1185">Reference proteome</keyword>
<accession>A8F7Q8</accession>
<evidence type="ECO:0000255" key="1">
    <source>
        <dbReference type="HAMAP-Rule" id="MF_01527"/>
    </source>
</evidence>